<accession>P0DXH2</accession>
<dbReference type="EC" id="2.1.1.-" evidence="2"/>
<dbReference type="EMBL" id="OP947597">
    <property type="protein sequence ID" value="WBW48722.1"/>
    <property type="molecule type" value="mRNA"/>
</dbReference>
<dbReference type="SMR" id="P0DXH2"/>
<dbReference type="UniPathway" id="UPA00213"/>
<dbReference type="GO" id="GO:0016746">
    <property type="term" value="F:acyltransferase activity"/>
    <property type="evidence" value="ECO:0007669"/>
    <property type="project" value="UniProtKB-KW"/>
</dbReference>
<dbReference type="GO" id="GO:0016491">
    <property type="term" value="F:oxidoreductase activity"/>
    <property type="evidence" value="ECO:0007669"/>
    <property type="project" value="UniProtKB-KW"/>
</dbReference>
<dbReference type="Gene3D" id="3.30.559.10">
    <property type="entry name" value="Chloramphenicol acetyltransferase-like domain"/>
    <property type="match status" value="2"/>
</dbReference>
<dbReference type="InterPro" id="IPR023213">
    <property type="entry name" value="CAT-like_dom_sf"/>
</dbReference>
<dbReference type="PANTHER" id="PTHR31623:SF28">
    <property type="entry name" value="BAHD ACYLTRANSFERASE"/>
    <property type="match status" value="1"/>
</dbReference>
<dbReference type="PANTHER" id="PTHR31623">
    <property type="entry name" value="F21J9.9"/>
    <property type="match status" value="1"/>
</dbReference>
<dbReference type="Pfam" id="PF02458">
    <property type="entry name" value="Transferase"/>
    <property type="match status" value="1"/>
</dbReference>
<dbReference type="SUPFAM" id="SSF52777">
    <property type="entry name" value="CoA-dependent acyltransferases"/>
    <property type="match status" value="1"/>
</dbReference>
<gene>
    <name evidence="3" type="primary">L21AT</name>
</gene>
<sequence length="423" mass="47597">MNLRITSSEIIKPSSPTPQNLKSYRLSIVDQLTPNVYFSIILLYTKTTENPTKTSDHLKKSLSETLTRYYPLAGQLKYDQLIVDCNDQGVPFVEADVSNHMSELLKLPNIDVLEQLLPFKPHEGFNAERSNVTVQVNYFGCGGMAIGLCFKHKVLDATTAAFFVKNWGVIARGAGEIKDVIYDQASLFPARDLSFLSKSVDEEFLKAESETKRFVFDGSAIASMREKFTHLGRRPTRFEVVSAVILGALISAAKESEEPPERLDTIISVNLRQRMVPPFPEHCLGNIISGGLIYWPLEKKLDHGSLAEEIHQSIKKVDDQFARKFYGEAEFLNLPRLGANEVVKKREFWVTSWCKTPLHQSDFGWGKPKWAGNSMRLNEITVLFDTSDGEGIEAWVGLPKKDMARFEQDATIVAYTSPNPTIL</sequence>
<feature type="chain" id="PRO_0000461343" description="Limonoid 21-O-acetyltransferse">
    <location>
        <begin position="1"/>
        <end position="423"/>
    </location>
</feature>
<feature type="active site" description="Proton acceptor" evidence="1">
    <location>
        <position position="152"/>
    </location>
</feature>
<feature type="active site" description="Proton acceptor" evidence="1">
    <location>
        <position position="362"/>
    </location>
</feature>
<protein>
    <recommendedName>
        <fullName evidence="3">Limonoid 21-O-acetyltransferse</fullName>
        <shortName evidence="3">MaL21AT</shortName>
        <ecNumber evidence="2">2.1.1.-</ecNumber>
    </recommendedName>
</protein>
<name>L21AT_MELAZ</name>
<reference key="1">
    <citation type="journal article" date="2023" name="Science">
        <title>Complex scaffold remodeling in plant triterpene biosynthesis.</title>
        <authorList>
            <person name="De La Pena R."/>
            <person name="Hodgson H."/>
            <person name="Liu J.C."/>
            <person name="Stephenson M.J."/>
            <person name="Martin A.C."/>
            <person name="Owen C."/>
            <person name="Harkess A."/>
            <person name="Leebens-Mack J."/>
            <person name="Jimenez L.E."/>
            <person name="Osbourn A."/>
            <person name="Sattely E.S."/>
        </authorList>
    </citation>
    <scope>NUCLEOTIDE SEQUENCE [MRNA]</scope>
    <scope>FUNCTION</scope>
    <scope>CATALYTIC ACTIVITY</scope>
    <scope>PATHWAY</scope>
    <scope>TISSUE SPECIFICITY</scope>
    <source>
        <strain>cv. Valencia</strain>
    </source>
</reference>
<comment type="function">
    <text evidence="2">Acetyltransferase involved in the biosynthesis of limonoids triterpene natural products such as azadirachtin, an antifeedant widely used as bioinsecticide, and possessing many medicinal applications including anti-tumoral, anti-malarial, anti-rheumatic, antibacterial, anti-inflammatory, anti-pyretic and diuretic effects (PubMed:36701471). Catalyzes the formation of 21-O-acetyl-isomeliandiol from isomeliandiol (PubMed:36701471).</text>
</comment>
<comment type="catalytic activity">
    <reaction evidence="2">
        <text>isomeliandiol + acetyl-CoA = 21-O-acetyl-isomeliandiol + CoA</text>
        <dbReference type="Rhea" id="RHEA:80303"/>
        <dbReference type="ChEBI" id="CHEBI:57287"/>
        <dbReference type="ChEBI" id="CHEBI:57288"/>
        <dbReference type="ChEBI" id="CHEBI:231453"/>
        <dbReference type="ChEBI" id="CHEBI:231455"/>
    </reaction>
    <physiologicalReaction direction="left-to-right" evidence="2">
        <dbReference type="Rhea" id="RHEA:80304"/>
    </physiologicalReaction>
</comment>
<comment type="pathway">
    <text evidence="2">Secondary metabolite biosynthesis; terpenoid biosynthesis.</text>
</comment>
<comment type="subunit">
    <text evidence="1">Monomer.</text>
</comment>
<comment type="tissue specificity">
    <text evidence="2">Mainly expressed in petioles.</text>
</comment>
<comment type="similarity">
    <text evidence="4">Belongs to the plant acyltransferase family.</text>
</comment>
<evidence type="ECO:0000250" key="1">
    <source>
        <dbReference type="UniProtKB" id="Q70PR7"/>
    </source>
</evidence>
<evidence type="ECO:0000269" key="2">
    <source>
    </source>
</evidence>
<evidence type="ECO:0000303" key="3">
    <source>
    </source>
</evidence>
<evidence type="ECO:0000305" key="4"/>
<organism>
    <name type="scientific">Melia azedarach</name>
    <name type="common">Chinaberry tree</name>
    <dbReference type="NCBI Taxonomy" id="155640"/>
    <lineage>
        <taxon>Eukaryota</taxon>
        <taxon>Viridiplantae</taxon>
        <taxon>Streptophyta</taxon>
        <taxon>Embryophyta</taxon>
        <taxon>Tracheophyta</taxon>
        <taxon>Spermatophyta</taxon>
        <taxon>Magnoliopsida</taxon>
        <taxon>eudicotyledons</taxon>
        <taxon>Gunneridae</taxon>
        <taxon>Pentapetalae</taxon>
        <taxon>rosids</taxon>
        <taxon>malvids</taxon>
        <taxon>Sapindales</taxon>
        <taxon>Meliaceae</taxon>
        <taxon>Melia</taxon>
    </lineage>
</organism>
<proteinExistence type="evidence at protein level"/>
<keyword id="KW-0012">Acyltransferase</keyword>
<keyword id="KW-0808">Transferase</keyword>